<name>CONGA_CONAV</name>
<dbReference type="GO" id="GO:0005576">
    <property type="term" value="C:extracellular region"/>
    <property type="evidence" value="ECO:0007669"/>
    <property type="project" value="UniProtKB-SubCell"/>
</dbReference>
<dbReference type="GO" id="GO:0090729">
    <property type="term" value="F:toxin activity"/>
    <property type="evidence" value="ECO:0007669"/>
    <property type="project" value="UniProtKB-KW"/>
</dbReference>
<evidence type="ECO:0000269" key="1">
    <source>
    </source>
</evidence>
<evidence type="ECO:0000303" key="2">
    <source>
    </source>
</evidence>
<evidence type="ECO:0000305" key="3"/>
<evidence type="ECO:0000305" key="4">
    <source>
    </source>
</evidence>
<comment type="function">
    <text evidence="1">Does not show any effect on voltage-gated sodium, potassium channels, and on nicotinic acetylcholine receptors (10 uM of toxin tested) (PubMed:27801785). Does not show antibacterial activity on both Gram-negative and Gram-positive bacteria (PubMed:27801785).</text>
</comment>
<comment type="subcellular location">
    <subcellularLocation>
        <location evidence="1">Secreted</location>
    </subcellularLocation>
</comment>
<comment type="tissue specificity">
    <text evidence="1">Expressed by the venom duct.</text>
</comment>
<comment type="domain">
    <text evidence="3">The cysteine framework is C-C.</text>
</comment>
<comment type="mass spectrometry" mass="2030.8" method="MALDI" evidence="1"/>
<comment type="miscellaneous">
    <text evidence="1">Negative results: does not show effect on Nav1.1, Nav1.2, Nav1.3, Nav1.4, Nav1.5, Nav1.6, Nav1.8 (PubMed:27801785). Does not show effect on Kv1.1, Kv1.2, Kv1.3, Kv1.4, Kv1.5, Kv1.6, Kv10.1 and Kv11.1/KCNH2/ERG1 (PubMed:27801785). Does not show effect on muscular (alpha-1-beta-1-delta-epsilon) and neuronal alpha-7, alpha-4-beta-2, alpha-4-beta-4, and alpha-3-beta-4 nAChRs (PubMed:27801785).</text>
</comment>
<comment type="similarity">
    <text evidence="4">Belongs to the ConoGAY family.</text>
</comment>
<feature type="peptide" id="PRO_0000439364" description="Conotoxin AusB" evidence="1">
    <location>
        <begin position="1"/>
        <end position="18"/>
    </location>
</feature>
<feature type="disulfide bond" evidence="1">
    <location>
        <begin position="11"/>
        <end position="18"/>
    </location>
</feature>
<accession>P0DOZ2</accession>
<keyword id="KW-0903">Direct protein sequencing</keyword>
<keyword id="KW-1015">Disulfide bond</keyword>
<keyword id="KW-0964">Secreted</keyword>
<keyword id="KW-0800">Toxin</keyword>
<sequence length="18" mass="2032">GAYFDGFDVPCVPRRDDC</sequence>
<reference key="1">
    <citation type="journal article" date="2016" name="Mar. Drugs">
        <title>Novel conopeptides of largely unexplored indo Pacific Conus sp.</title>
        <authorList>
            <person name="Lebbe E.K."/>
            <person name="Ghequire M.G."/>
            <person name="Peigneur S."/>
            <person name="Mille B.G."/>
            <person name="Devi P."/>
            <person name="Ravichandran S."/>
            <person name="Waelkens E."/>
            <person name="D'Souza L."/>
            <person name="De Mot R."/>
            <person name="Tytgat J."/>
        </authorList>
    </citation>
    <scope>PROTEIN SEQUENCE</scope>
    <scope>SUBCELLULAR LOCATION</scope>
    <scope>TISSUE SPECIFICITY</scope>
    <scope>MASS SPECTROMETRY</scope>
    <scope>DISULFIDE BOND</scope>
    <scope>SYNTHESIS</scope>
    <source>
        <tissue>Venom</tissue>
    </source>
</reference>
<proteinExistence type="evidence at protein level"/>
<protein>
    <recommendedName>
        <fullName evidence="2">Conotoxin AusB</fullName>
    </recommendedName>
</protein>
<organism>
    <name type="scientific">Conus australis</name>
    <name type="common">Austral cone</name>
    <name type="synonym">Asprella australis</name>
    <dbReference type="NCBI Taxonomy" id="1519798"/>
    <lineage>
        <taxon>Eukaryota</taxon>
        <taxon>Metazoa</taxon>
        <taxon>Spiralia</taxon>
        <taxon>Lophotrochozoa</taxon>
        <taxon>Mollusca</taxon>
        <taxon>Gastropoda</taxon>
        <taxon>Caenogastropoda</taxon>
        <taxon>Neogastropoda</taxon>
        <taxon>Conoidea</taxon>
        <taxon>Conidae</taxon>
        <taxon>Conus</taxon>
        <taxon>Phasmoconus</taxon>
    </lineage>
</organism>